<organism>
    <name type="scientific">Prochlorococcus marinus (strain MIT 9303)</name>
    <dbReference type="NCBI Taxonomy" id="59922"/>
    <lineage>
        <taxon>Bacteria</taxon>
        <taxon>Bacillati</taxon>
        <taxon>Cyanobacteriota</taxon>
        <taxon>Cyanophyceae</taxon>
        <taxon>Synechococcales</taxon>
        <taxon>Prochlorococcaceae</taxon>
        <taxon>Prochlorococcus</taxon>
    </lineage>
</organism>
<dbReference type="EMBL" id="CP000554">
    <property type="protein sequence ID" value="ABM79058.1"/>
    <property type="molecule type" value="Genomic_DNA"/>
</dbReference>
<dbReference type="RefSeq" id="WP_011826924.1">
    <property type="nucleotide sequence ID" value="NC_008820.1"/>
</dbReference>
<dbReference type="SMR" id="A2CC48"/>
<dbReference type="STRING" id="59922.P9303_23231"/>
<dbReference type="KEGG" id="pmf:P9303_23231"/>
<dbReference type="HOGENOM" id="CLU_135723_6_2_3"/>
<dbReference type="BioCyc" id="PMAR59922:G1G80-2039-MONOMER"/>
<dbReference type="Proteomes" id="UP000002274">
    <property type="component" value="Chromosome"/>
</dbReference>
<dbReference type="GO" id="GO:0005737">
    <property type="term" value="C:cytoplasm"/>
    <property type="evidence" value="ECO:0007669"/>
    <property type="project" value="UniProtKB-ARBA"/>
</dbReference>
<dbReference type="GO" id="GO:1990904">
    <property type="term" value="C:ribonucleoprotein complex"/>
    <property type="evidence" value="ECO:0007669"/>
    <property type="project" value="UniProtKB-KW"/>
</dbReference>
<dbReference type="GO" id="GO:0005840">
    <property type="term" value="C:ribosome"/>
    <property type="evidence" value="ECO:0007669"/>
    <property type="project" value="UniProtKB-KW"/>
</dbReference>
<dbReference type="GO" id="GO:0003735">
    <property type="term" value="F:structural constituent of ribosome"/>
    <property type="evidence" value="ECO:0007669"/>
    <property type="project" value="InterPro"/>
</dbReference>
<dbReference type="GO" id="GO:0006412">
    <property type="term" value="P:translation"/>
    <property type="evidence" value="ECO:0007669"/>
    <property type="project" value="UniProtKB-UniRule"/>
</dbReference>
<dbReference type="HAMAP" id="MF_00251">
    <property type="entry name" value="Ribosomal_bL36"/>
    <property type="match status" value="1"/>
</dbReference>
<dbReference type="InterPro" id="IPR000473">
    <property type="entry name" value="Ribosomal_bL36"/>
</dbReference>
<dbReference type="InterPro" id="IPR035977">
    <property type="entry name" value="Ribosomal_bL36_sp"/>
</dbReference>
<dbReference type="NCBIfam" id="TIGR01022">
    <property type="entry name" value="rpmJ_bact"/>
    <property type="match status" value="1"/>
</dbReference>
<dbReference type="PANTHER" id="PTHR42888">
    <property type="entry name" value="50S RIBOSOMAL PROTEIN L36, CHLOROPLASTIC"/>
    <property type="match status" value="1"/>
</dbReference>
<dbReference type="PANTHER" id="PTHR42888:SF1">
    <property type="entry name" value="LARGE RIBOSOMAL SUBUNIT PROTEIN BL36C"/>
    <property type="match status" value="1"/>
</dbReference>
<dbReference type="Pfam" id="PF00444">
    <property type="entry name" value="Ribosomal_L36"/>
    <property type="match status" value="1"/>
</dbReference>
<dbReference type="SUPFAM" id="SSF57840">
    <property type="entry name" value="Ribosomal protein L36"/>
    <property type="match status" value="1"/>
</dbReference>
<dbReference type="PROSITE" id="PS00828">
    <property type="entry name" value="RIBOSOMAL_L36"/>
    <property type="match status" value="1"/>
</dbReference>
<protein>
    <recommendedName>
        <fullName evidence="1">Large ribosomal subunit protein bL36</fullName>
    </recommendedName>
    <alternativeName>
        <fullName evidence="2">50S ribosomal protein L36</fullName>
    </alternativeName>
</protein>
<proteinExistence type="inferred from homology"/>
<reference key="1">
    <citation type="journal article" date="2007" name="PLoS Genet.">
        <title>Patterns and implications of gene gain and loss in the evolution of Prochlorococcus.</title>
        <authorList>
            <person name="Kettler G.C."/>
            <person name="Martiny A.C."/>
            <person name="Huang K."/>
            <person name="Zucker J."/>
            <person name="Coleman M.L."/>
            <person name="Rodrigue S."/>
            <person name="Chen F."/>
            <person name="Lapidus A."/>
            <person name="Ferriera S."/>
            <person name="Johnson J."/>
            <person name="Steglich C."/>
            <person name="Church G.M."/>
            <person name="Richardson P."/>
            <person name="Chisholm S.W."/>
        </authorList>
    </citation>
    <scope>NUCLEOTIDE SEQUENCE [LARGE SCALE GENOMIC DNA]</scope>
    <source>
        <strain>MIT 9303</strain>
    </source>
</reference>
<evidence type="ECO:0000255" key="1">
    <source>
        <dbReference type="HAMAP-Rule" id="MF_00251"/>
    </source>
</evidence>
<evidence type="ECO:0000305" key="2"/>
<name>RL36_PROM3</name>
<feature type="chain" id="PRO_0000302266" description="Large ribosomal subunit protein bL36">
    <location>
        <begin position="1"/>
        <end position="37"/>
    </location>
</feature>
<sequence>MKVRASVKKMCEKCRVIRRHGRVMVICSNPKHKQRQG</sequence>
<keyword id="KW-0687">Ribonucleoprotein</keyword>
<keyword id="KW-0689">Ribosomal protein</keyword>
<comment type="similarity">
    <text evidence="1">Belongs to the bacterial ribosomal protein bL36 family.</text>
</comment>
<gene>
    <name evidence="1" type="primary">rpmJ</name>
    <name type="ordered locus">P9303_23231</name>
</gene>
<accession>A2CC48</accession>